<comment type="function">
    <text evidence="1">Plays an important role in the de novo pathway of purine nucleotide biosynthesis. Catalyzes the first committed step in the biosynthesis of AMP from IMP.</text>
</comment>
<comment type="catalytic activity">
    <reaction evidence="1">
        <text>IMP + L-aspartate + GTP = N(6)-(1,2-dicarboxyethyl)-AMP + GDP + phosphate + 2 H(+)</text>
        <dbReference type="Rhea" id="RHEA:15753"/>
        <dbReference type="ChEBI" id="CHEBI:15378"/>
        <dbReference type="ChEBI" id="CHEBI:29991"/>
        <dbReference type="ChEBI" id="CHEBI:37565"/>
        <dbReference type="ChEBI" id="CHEBI:43474"/>
        <dbReference type="ChEBI" id="CHEBI:57567"/>
        <dbReference type="ChEBI" id="CHEBI:58053"/>
        <dbReference type="ChEBI" id="CHEBI:58189"/>
        <dbReference type="EC" id="6.3.4.4"/>
    </reaction>
</comment>
<comment type="cofactor">
    <cofactor evidence="1">
        <name>Mg(2+)</name>
        <dbReference type="ChEBI" id="CHEBI:18420"/>
    </cofactor>
    <text evidence="1">Binds 1 Mg(2+) ion per subunit.</text>
</comment>
<comment type="pathway">
    <text evidence="1">Purine metabolism; AMP biosynthesis via de novo pathway; AMP from IMP: step 1/2.</text>
</comment>
<comment type="subunit">
    <text evidence="1">Homodimer.</text>
</comment>
<comment type="subcellular location">
    <subcellularLocation>
        <location evidence="1">Cytoplasm</location>
    </subcellularLocation>
</comment>
<comment type="similarity">
    <text evidence="1">Belongs to the adenylosuccinate synthetase family.</text>
</comment>
<name>PURA_HAEIE</name>
<evidence type="ECO:0000255" key="1">
    <source>
        <dbReference type="HAMAP-Rule" id="MF_00011"/>
    </source>
</evidence>
<gene>
    <name evidence="1" type="primary">purA</name>
    <name type="ordered locus">CGSHiEE_05830</name>
</gene>
<accession>A5UCM6</accession>
<dbReference type="EC" id="6.3.4.4" evidence="1"/>
<dbReference type="EMBL" id="CP000671">
    <property type="protein sequence ID" value="ABQ98527.1"/>
    <property type="molecule type" value="Genomic_DNA"/>
</dbReference>
<dbReference type="SMR" id="A5UCM6"/>
<dbReference type="KEGG" id="hip:CGSHiEE_05830"/>
<dbReference type="HOGENOM" id="CLU_029848_0_0_6"/>
<dbReference type="UniPathway" id="UPA00075">
    <property type="reaction ID" value="UER00335"/>
</dbReference>
<dbReference type="GO" id="GO:0005737">
    <property type="term" value="C:cytoplasm"/>
    <property type="evidence" value="ECO:0007669"/>
    <property type="project" value="UniProtKB-SubCell"/>
</dbReference>
<dbReference type="GO" id="GO:0004019">
    <property type="term" value="F:adenylosuccinate synthase activity"/>
    <property type="evidence" value="ECO:0007669"/>
    <property type="project" value="UniProtKB-UniRule"/>
</dbReference>
<dbReference type="GO" id="GO:0005525">
    <property type="term" value="F:GTP binding"/>
    <property type="evidence" value="ECO:0007669"/>
    <property type="project" value="UniProtKB-UniRule"/>
</dbReference>
<dbReference type="GO" id="GO:0000287">
    <property type="term" value="F:magnesium ion binding"/>
    <property type="evidence" value="ECO:0007669"/>
    <property type="project" value="UniProtKB-UniRule"/>
</dbReference>
<dbReference type="GO" id="GO:0044208">
    <property type="term" value="P:'de novo' AMP biosynthetic process"/>
    <property type="evidence" value="ECO:0007669"/>
    <property type="project" value="UniProtKB-UniRule"/>
</dbReference>
<dbReference type="GO" id="GO:0046040">
    <property type="term" value="P:IMP metabolic process"/>
    <property type="evidence" value="ECO:0007669"/>
    <property type="project" value="TreeGrafter"/>
</dbReference>
<dbReference type="CDD" id="cd03108">
    <property type="entry name" value="AdSS"/>
    <property type="match status" value="1"/>
</dbReference>
<dbReference type="FunFam" id="1.10.300.10:FF:000001">
    <property type="entry name" value="Adenylosuccinate synthetase"/>
    <property type="match status" value="1"/>
</dbReference>
<dbReference type="FunFam" id="3.90.170.10:FF:000001">
    <property type="entry name" value="Adenylosuccinate synthetase"/>
    <property type="match status" value="1"/>
</dbReference>
<dbReference type="Gene3D" id="3.40.440.10">
    <property type="entry name" value="Adenylosuccinate Synthetase, subunit A, domain 1"/>
    <property type="match status" value="1"/>
</dbReference>
<dbReference type="Gene3D" id="1.10.300.10">
    <property type="entry name" value="Adenylosuccinate Synthetase, subunit A, domain 2"/>
    <property type="match status" value="1"/>
</dbReference>
<dbReference type="Gene3D" id="3.90.170.10">
    <property type="entry name" value="Adenylosuccinate Synthetase, subunit A, domain 3"/>
    <property type="match status" value="1"/>
</dbReference>
<dbReference type="HAMAP" id="MF_00011">
    <property type="entry name" value="Adenylosucc_synth"/>
    <property type="match status" value="1"/>
</dbReference>
<dbReference type="InterPro" id="IPR018220">
    <property type="entry name" value="Adenylosuccin_syn_GTP-bd"/>
</dbReference>
<dbReference type="InterPro" id="IPR033128">
    <property type="entry name" value="Adenylosuccin_syn_Lys_AS"/>
</dbReference>
<dbReference type="InterPro" id="IPR042109">
    <property type="entry name" value="Adenylosuccinate_synth_dom1"/>
</dbReference>
<dbReference type="InterPro" id="IPR042110">
    <property type="entry name" value="Adenylosuccinate_synth_dom2"/>
</dbReference>
<dbReference type="InterPro" id="IPR042111">
    <property type="entry name" value="Adenylosuccinate_synth_dom3"/>
</dbReference>
<dbReference type="InterPro" id="IPR001114">
    <property type="entry name" value="Adenylosuccinate_synthetase"/>
</dbReference>
<dbReference type="InterPro" id="IPR027417">
    <property type="entry name" value="P-loop_NTPase"/>
</dbReference>
<dbReference type="NCBIfam" id="NF002223">
    <property type="entry name" value="PRK01117.1"/>
    <property type="match status" value="1"/>
</dbReference>
<dbReference type="NCBIfam" id="TIGR00184">
    <property type="entry name" value="purA"/>
    <property type="match status" value="1"/>
</dbReference>
<dbReference type="PANTHER" id="PTHR11846">
    <property type="entry name" value="ADENYLOSUCCINATE SYNTHETASE"/>
    <property type="match status" value="1"/>
</dbReference>
<dbReference type="PANTHER" id="PTHR11846:SF0">
    <property type="entry name" value="ADENYLOSUCCINATE SYNTHETASE"/>
    <property type="match status" value="1"/>
</dbReference>
<dbReference type="Pfam" id="PF00709">
    <property type="entry name" value="Adenylsucc_synt"/>
    <property type="match status" value="1"/>
</dbReference>
<dbReference type="SMART" id="SM00788">
    <property type="entry name" value="Adenylsucc_synt"/>
    <property type="match status" value="1"/>
</dbReference>
<dbReference type="SUPFAM" id="SSF52540">
    <property type="entry name" value="P-loop containing nucleoside triphosphate hydrolases"/>
    <property type="match status" value="1"/>
</dbReference>
<dbReference type="PROSITE" id="PS01266">
    <property type="entry name" value="ADENYLOSUCCIN_SYN_1"/>
    <property type="match status" value="1"/>
</dbReference>
<dbReference type="PROSITE" id="PS00513">
    <property type="entry name" value="ADENYLOSUCCIN_SYN_2"/>
    <property type="match status" value="1"/>
</dbReference>
<feature type="chain" id="PRO_1000000831" description="Adenylosuccinate synthetase">
    <location>
        <begin position="1"/>
        <end position="432"/>
    </location>
</feature>
<feature type="active site" description="Proton acceptor" evidence="1">
    <location>
        <position position="14"/>
    </location>
</feature>
<feature type="active site" description="Proton donor" evidence="1">
    <location>
        <position position="42"/>
    </location>
</feature>
<feature type="binding site" evidence="1">
    <location>
        <begin position="13"/>
        <end position="19"/>
    </location>
    <ligand>
        <name>GTP</name>
        <dbReference type="ChEBI" id="CHEBI:37565"/>
    </ligand>
</feature>
<feature type="binding site" description="in other chain" evidence="1">
    <location>
        <begin position="14"/>
        <end position="17"/>
    </location>
    <ligand>
        <name>IMP</name>
        <dbReference type="ChEBI" id="CHEBI:58053"/>
        <note>ligand shared between dimeric partners</note>
    </ligand>
</feature>
<feature type="binding site" evidence="1">
    <location>
        <position position="14"/>
    </location>
    <ligand>
        <name>Mg(2+)</name>
        <dbReference type="ChEBI" id="CHEBI:18420"/>
    </ligand>
</feature>
<feature type="binding site" description="in other chain" evidence="1">
    <location>
        <begin position="39"/>
        <end position="42"/>
    </location>
    <ligand>
        <name>IMP</name>
        <dbReference type="ChEBI" id="CHEBI:58053"/>
        <note>ligand shared between dimeric partners</note>
    </ligand>
</feature>
<feature type="binding site" evidence="1">
    <location>
        <begin position="41"/>
        <end position="43"/>
    </location>
    <ligand>
        <name>GTP</name>
        <dbReference type="ChEBI" id="CHEBI:37565"/>
    </ligand>
</feature>
<feature type="binding site" evidence="1">
    <location>
        <position position="41"/>
    </location>
    <ligand>
        <name>Mg(2+)</name>
        <dbReference type="ChEBI" id="CHEBI:18420"/>
    </ligand>
</feature>
<feature type="binding site" description="in other chain" evidence="1">
    <location>
        <position position="130"/>
    </location>
    <ligand>
        <name>IMP</name>
        <dbReference type="ChEBI" id="CHEBI:58053"/>
        <note>ligand shared between dimeric partners</note>
    </ligand>
</feature>
<feature type="binding site" evidence="1">
    <location>
        <position position="144"/>
    </location>
    <ligand>
        <name>IMP</name>
        <dbReference type="ChEBI" id="CHEBI:58053"/>
        <note>ligand shared between dimeric partners</note>
    </ligand>
</feature>
<feature type="binding site" description="in other chain" evidence="1">
    <location>
        <position position="225"/>
    </location>
    <ligand>
        <name>IMP</name>
        <dbReference type="ChEBI" id="CHEBI:58053"/>
        <note>ligand shared between dimeric partners</note>
    </ligand>
</feature>
<feature type="binding site" description="in other chain" evidence="1">
    <location>
        <position position="240"/>
    </location>
    <ligand>
        <name>IMP</name>
        <dbReference type="ChEBI" id="CHEBI:58053"/>
        <note>ligand shared between dimeric partners</note>
    </ligand>
</feature>
<feature type="binding site" evidence="1">
    <location>
        <begin position="300"/>
        <end position="306"/>
    </location>
    <ligand>
        <name>substrate</name>
    </ligand>
</feature>
<feature type="binding site" description="in other chain" evidence="1">
    <location>
        <position position="304"/>
    </location>
    <ligand>
        <name>IMP</name>
        <dbReference type="ChEBI" id="CHEBI:58053"/>
        <note>ligand shared between dimeric partners</note>
    </ligand>
</feature>
<feature type="binding site" evidence="1">
    <location>
        <position position="306"/>
    </location>
    <ligand>
        <name>GTP</name>
        <dbReference type="ChEBI" id="CHEBI:37565"/>
    </ligand>
</feature>
<feature type="binding site" evidence="1">
    <location>
        <begin position="332"/>
        <end position="334"/>
    </location>
    <ligand>
        <name>GTP</name>
        <dbReference type="ChEBI" id="CHEBI:37565"/>
    </ligand>
</feature>
<feature type="binding site" evidence="1">
    <location>
        <begin position="415"/>
        <end position="417"/>
    </location>
    <ligand>
        <name>GTP</name>
        <dbReference type="ChEBI" id="CHEBI:37565"/>
    </ligand>
</feature>
<protein>
    <recommendedName>
        <fullName evidence="1">Adenylosuccinate synthetase</fullName>
        <shortName evidence="1">AMPSase</shortName>
        <shortName evidence="1">AdSS</shortName>
        <ecNumber evidence="1">6.3.4.4</ecNumber>
    </recommendedName>
    <alternativeName>
        <fullName evidence="1">IMP--aspartate ligase</fullName>
    </alternativeName>
</protein>
<reference key="1">
    <citation type="journal article" date="2007" name="Genome Biol.">
        <title>Characterization and modeling of the Haemophilus influenzae core and supragenomes based on the complete genomic sequences of Rd and 12 clinical nontypeable strains.</title>
        <authorList>
            <person name="Hogg J.S."/>
            <person name="Hu F.Z."/>
            <person name="Janto B."/>
            <person name="Boissy R."/>
            <person name="Hayes J."/>
            <person name="Keefe R."/>
            <person name="Post J.C."/>
            <person name="Ehrlich G.D."/>
        </authorList>
    </citation>
    <scope>NUCLEOTIDE SEQUENCE [LARGE SCALE GENOMIC DNA]</scope>
    <source>
        <strain>PittEE</strain>
    </source>
</reference>
<organism>
    <name type="scientific">Haemophilus influenzae (strain PittEE)</name>
    <dbReference type="NCBI Taxonomy" id="374930"/>
    <lineage>
        <taxon>Bacteria</taxon>
        <taxon>Pseudomonadati</taxon>
        <taxon>Pseudomonadota</taxon>
        <taxon>Gammaproteobacteria</taxon>
        <taxon>Pasteurellales</taxon>
        <taxon>Pasteurellaceae</taxon>
        <taxon>Haemophilus</taxon>
    </lineage>
</organism>
<sequence>MGKSVVILGAQWGDEGKGKIVDLLTDRVKYVVRYQGGHNAGHTLIINGEKTVLRLIPSGMLHPNVTCLIGNGVVVSPEALMKEMCELESRGIKVRERLLISEACPLILPYHVAMDHAREAALGKKAIGTTGRGIGPAYEDKVARRGLRVGDLFNKEAFAEKLKNILEYYNFQLVNYYKVEPVDYQKTLDDVMAIADVITGMVADITTILDTARKNGEHILFEGAQGTMLDIDHGTYPYVTSSNTTAGGVATGSGFGPRNLDYVLGIIKAYCTRVGGGPFTTELFDDVGAEIARKGNEFGAVTGRPRRCGWFDAVAIRRAIQLNSISGFCMTKLDVLDGFDEVKICVAYKMPNGEIVEYAPLAAKDWEGVEPIYETLPGWKENTFRITDVNKLPQNCINYIKRIEEVTGVPIDILSTGPDRVETMILRDPFAA</sequence>
<proteinExistence type="inferred from homology"/>
<keyword id="KW-0963">Cytoplasm</keyword>
<keyword id="KW-0342">GTP-binding</keyword>
<keyword id="KW-0436">Ligase</keyword>
<keyword id="KW-0460">Magnesium</keyword>
<keyword id="KW-0479">Metal-binding</keyword>
<keyword id="KW-0547">Nucleotide-binding</keyword>
<keyword id="KW-0658">Purine biosynthesis</keyword>